<feature type="chain" id="PRO_0000362099" description="Kynurenine formamidase">
    <location>
        <begin position="1"/>
        <end position="213"/>
    </location>
</feature>
<feature type="active site" description="Proton donor/acceptor" evidence="1">
    <location>
        <position position="58"/>
    </location>
</feature>
<feature type="binding site" evidence="1">
    <location>
        <position position="18"/>
    </location>
    <ligand>
        <name>substrate</name>
    </ligand>
</feature>
<feature type="binding site" evidence="1">
    <location>
        <position position="48"/>
    </location>
    <ligand>
        <name>Zn(2+)</name>
        <dbReference type="ChEBI" id="CHEBI:29105"/>
        <label>1</label>
    </ligand>
</feature>
<feature type="binding site" evidence="1">
    <location>
        <position position="52"/>
    </location>
    <ligand>
        <name>Zn(2+)</name>
        <dbReference type="ChEBI" id="CHEBI:29105"/>
        <label>1</label>
    </ligand>
</feature>
<feature type="binding site" evidence="1">
    <location>
        <position position="54"/>
    </location>
    <ligand>
        <name>Zn(2+)</name>
        <dbReference type="ChEBI" id="CHEBI:29105"/>
        <label>1</label>
    </ligand>
</feature>
<feature type="binding site" evidence="1">
    <location>
        <position position="54"/>
    </location>
    <ligand>
        <name>Zn(2+)</name>
        <dbReference type="ChEBI" id="CHEBI:29105"/>
        <label>2</label>
    </ligand>
</feature>
<feature type="binding site" evidence="1">
    <location>
        <position position="160"/>
    </location>
    <ligand>
        <name>Zn(2+)</name>
        <dbReference type="ChEBI" id="CHEBI:29105"/>
        <label>2</label>
    </ligand>
</feature>
<feature type="binding site" evidence="1">
    <location>
        <position position="172"/>
    </location>
    <ligand>
        <name>Zn(2+)</name>
        <dbReference type="ChEBI" id="CHEBI:29105"/>
        <label>1</label>
    </ligand>
</feature>
<feature type="binding site" evidence="1">
    <location>
        <position position="172"/>
    </location>
    <ligand>
        <name>Zn(2+)</name>
        <dbReference type="ChEBI" id="CHEBI:29105"/>
        <label>2</label>
    </ligand>
</feature>
<reference key="1">
    <citation type="submission" date="2008-04" db="EMBL/GenBank/DDBJ databases">
        <title>Complete sequence of chromosome 1 of Burkholderia ambifaria MC40-6.</title>
        <authorList>
            <person name="Copeland A."/>
            <person name="Lucas S."/>
            <person name="Lapidus A."/>
            <person name="Glavina del Rio T."/>
            <person name="Dalin E."/>
            <person name="Tice H."/>
            <person name="Pitluck S."/>
            <person name="Chain P."/>
            <person name="Malfatti S."/>
            <person name="Shin M."/>
            <person name="Vergez L."/>
            <person name="Lang D."/>
            <person name="Schmutz J."/>
            <person name="Larimer F."/>
            <person name="Land M."/>
            <person name="Hauser L."/>
            <person name="Kyrpides N."/>
            <person name="Lykidis A."/>
            <person name="Ramette A."/>
            <person name="Konstantinidis K."/>
            <person name="Tiedje J."/>
            <person name="Richardson P."/>
        </authorList>
    </citation>
    <scope>NUCLEOTIDE SEQUENCE [LARGE SCALE GENOMIC DNA]</scope>
    <source>
        <strain>MC40-6</strain>
    </source>
</reference>
<dbReference type="EC" id="3.5.1.9" evidence="1"/>
<dbReference type="EMBL" id="CP001025">
    <property type="protein sequence ID" value="ACB64974.1"/>
    <property type="molecule type" value="Genomic_DNA"/>
</dbReference>
<dbReference type="RefSeq" id="WP_012364566.1">
    <property type="nucleotide sequence ID" value="NC_010551.1"/>
</dbReference>
<dbReference type="SMR" id="B1YVH0"/>
<dbReference type="KEGG" id="bac:BamMC406_2496"/>
<dbReference type="HOGENOM" id="CLU_030671_3_1_4"/>
<dbReference type="OrthoDB" id="9796085at2"/>
<dbReference type="UniPathway" id="UPA00333">
    <property type="reaction ID" value="UER00454"/>
</dbReference>
<dbReference type="Proteomes" id="UP000001680">
    <property type="component" value="Chromosome 1"/>
</dbReference>
<dbReference type="GO" id="GO:0004061">
    <property type="term" value="F:arylformamidase activity"/>
    <property type="evidence" value="ECO:0000250"/>
    <property type="project" value="UniProtKB"/>
</dbReference>
<dbReference type="GO" id="GO:0004328">
    <property type="term" value="F:formamidase activity"/>
    <property type="evidence" value="ECO:0007669"/>
    <property type="project" value="InterPro"/>
</dbReference>
<dbReference type="GO" id="GO:0008270">
    <property type="term" value="F:zinc ion binding"/>
    <property type="evidence" value="ECO:0007669"/>
    <property type="project" value="UniProtKB-UniRule"/>
</dbReference>
<dbReference type="GO" id="GO:0043420">
    <property type="term" value="P:anthranilate metabolic process"/>
    <property type="evidence" value="ECO:0000250"/>
    <property type="project" value="UniProtKB"/>
</dbReference>
<dbReference type="GO" id="GO:0019441">
    <property type="term" value="P:L-tryptophan catabolic process to kynurenine"/>
    <property type="evidence" value="ECO:0000250"/>
    <property type="project" value="UniProtKB"/>
</dbReference>
<dbReference type="FunFam" id="3.50.30.50:FF:000001">
    <property type="entry name" value="Kynurenine formamidase"/>
    <property type="match status" value="1"/>
</dbReference>
<dbReference type="Gene3D" id="3.50.30.50">
    <property type="entry name" value="Putative cyclase"/>
    <property type="match status" value="1"/>
</dbReference>
<dbReference type="HAMAP" id="MF_01969">
    <property type="entry name" value="KynB"/>
    <property type="match status" value="1"/>
</dbReference>
<dbReference type="InterPro" id="IPR007325">
    <property type="entry name" value="KFase/CYL"/>
</dbReference>
<dbReference type="InterPro" id="IPR037175">
    <property type="entry name" value="KFase_sf"/>
</dbReference>
<dbReference type="InterPro" id="IPR017484">
    <property type="entry name" value="Kynurenine_formamidase_bac"/>
</dbReference>
<dbReference type="NCBIfam" id="TIGR03035">
    <property type="entry name" value="trp_arylform"/>
    <property type="match status" value="1"/>
</dbReference>
<dbReference type="PANTHER" id="PTHR31118">
    <property type="entry name" value="CYCLASE-LIKE PROTEIN 2"/>
    <property type="match status" value="1"/>
</dbReference>
<dbReference type="PANTHER" id="PTHR31118:SF32">
    <property type="entry name" value="KYNURENINE FORMAMIDASE"/>
    <property type="match status" value="1"/>
</dbReference>
<dbReference type="Pfam" id="PF04199">
    <property type="entry name" value="Cyclase"/>
    <property type="match status" value="1"/>
</dbReference>
<dbReference type="SUPFAM" id="SSF102198">
    <property type="entry name" value="Putative cyclase"/>
    <property type="match status" value="1"/>
</dbReference>
<evidence type="ECO:0000255" key="1">
    <source>
        <dbReference type="HAMAP-Rule" id="MF_01969"/>
    </source>
</evidence>
<protein>
    <recommendedName>
        <fullName evidence="1">Kynurenine formamidase</fullName>
        <shortName evidence="1">KFA</shortName>
        <shortName evidence="1">KFase</shortName>
        <ecNumber evidence="1">3.5.1.9</ecNumber>
    </recommendedName>
    <alternativeName>
        <fullName evidence="1">Arylformamidase</fullName>
    </alternativeName>
    <alternativeName>
        <fullName evidence="1">N-formylkynurenine formamidase</fullName>
        <shortName evidence="1">FKF</shortName>
    </alternativeName>
</protein>
<keyword id="KW-0378">Hydrolase</keyword>
<keyword id="KW-0479">Metal-binding</keyword>
<keyword id="KW-0823">Tryptophan catabolism</keyword>
<keyword id="KW-0862">Zinc</keyword>
<accession>B1YVH0</accession>
<gene>
    <name evidence="1" type="primary">kynB</name>
    <name type="ordered locus">BamMC406_2496</name>
</gene>
<sequence length="213" mass="22699">MDTLWDISPPVSPATPVWPGDTPVSVERVWRMEAGSPVNVARLTLSPHTGAHCDAPLHYDADGAPIGAVPLDTYLGPCRVIHCIGAAPVVRPADIEAALDGVPPRVLLRTYARASVEQWDSGFCAVAPETVDLLAARGVKLIGIDTPSLDPQESKTMDAHHRVRAHRMAILEGIVLDDVPPGDYELIALPLKFTTLDASPVRAVLRALPGHSA</sequence>
<comment type="function">
    <text evidence="1">Catalyzes the hydrolysis of N-formyl-L-kynurenine to L-kynurenine, the second step in the kynurenine pathway of tryptophan degradation.</text>
</comment>
<comment type="catalytic activity">
    <reaction evidence="1">
        <text>N-formyl-L-kynurenine + H2O = L-kynurenine + formate + H(+)</text>
        <dbReference type="Rhea" id="RHEA:13009"/>
        <dbReference type="ChEBI" id="CHEBI:15377"/>
        <dbReference type="ChEBI" id="CHEBI:15378"/>
        <dbReference type="ChEBI" id="CHEBI:15740"/>
        <dbReference type="ChEBI" id="CHEBI:57959"/>
        <dbReference type="ChEBI" id="CHEBI:58629"/>
        <dbReference type="EC" id="3.5.1.9"/>
    </reaction>
</comment>
<comment type="cofactor">
    <cofactor evidence="1">
        <name>Zn(2+)</name>
        <dbReference type="ChEBI" id="CHEBI:29105"/>
    </cofactor>
    <text evidence="1">Binds 2 zinc ions per subunit.</text>
</comment>
<comment type="pathway">
    <text evidence="1">Amino-acid degradation; L-tryptophan degradation via kynurenine pathway; L-kynurenine from L-tryptophan: step 2/2.</text>
</comment>
<comment type="subunit">
    <text evidence="1">Homodimer.</text>
</comment>
<comment type="similarity">
    <text evidence="1">Belongs to the Cyclase 1 superfamily. KynB family.</text>
</comment>
<proteinExistence type="inferred from homology"/>
<name>KYNB_BURA4</name>
<organism>
    <name type="scientific">Burkholderia ambifaria (strain MC40-6)</name>
    <dbReference type="NCBI Taxonomy" id="398577"/>
    <lineage>
        <taxon>Bacteria</taxon>
        <taxon>Pseudomonadati</taxon>
        <taxon>Pseudomonadota</taxon>
        <taxon>Betaproteobacteria</taxon>
        <taxon>Burkholderiales</taxon>
        <taxon>Burkholderiaceae</taxon>
        <taxon>Burkholderia</taxon>
        <taxon>Burkholderia cepacia complex</taxon>
    </lineage>
</organism>